<evidence type="ECO:0000250" key="1">
    <source>
        <dbReference type="UniProtKB" id="P04798"/>
    </source>
</evidence>
<evidence type="ECO:0000255" key="2"/>
<evidence type="ECO:0000255" key="3">
    <source>
        <dbReference type="PROSITE-ProRule" id="PRU00498"/>
    </source>
</evidence>
<evidence type="ECO:0000269" key="4">
    <source>
    </source>
</evidence>
<evidence type="ECO:0000303" key="5">
    <source>
    </source>
</evidence>
<evidence type="ECO:0000305" key="6"/>
<evidence type="ECO:0000305" key="7">
    <source>
    </source>
</evidence>
<protein>
    <recommendedName>
        <fullName evidence="5">Cytochrome P450 monooxygenase nodJ</fullName>
        <ecNumber evidence="7">1.-.-.-</ecNumber>
    </recommendedName>
    <alternativeName>
        <fullName evidence="5">Nodulisporic acid biosynthesis cluster protein J</fullName>
    </alternativeName>
</protein>
<dbReference type="EC" id="1.-.-.-" evidence="7"/>
<dbReference type="EMBL" id="MG182145">
    <property type="protein sequence ID" value="AUM60053.1"/>
    <property type="molecule type" value="Genomic_DNA"/>
</dbReference>
<dbReference type="SMR" id="A0A2I6PJ00"/>
<dbReference type="GlyCosmos" id="A0A2I6PJ00">
    <property type="glycosylation" value="3 sites, No reported glycans"/>
</dbReference>
<dbReference type="GO" id="GO:0016020">
    <property type="term" value="C:membrane"/>
    <property type="evidence" value="ECO:0007669"/>
    <property type="project" value="UniProtKB-SubCell"/>
</dbReference>
<dbReference type="GO" id="GO:0020037">
    <property type="term" value="F:heme binding"/>
    <property type="evidence" value="ECO:0007669"/>
    <property type="project" value="InterPro"/>
</dbReference>
<dbReference type="GO" id="GO:0005506">
    <property type="term" value="F:iron ion binding"/>
    <property type="evidence" value="ECO:0007669"/>
    <property type="project" value="InterPro"/>
</dbReference>
<dbReference type="GO" id="GO:0004497">
    <property type="term" value="F:monooxygenase activity"/>
    <property type="evidence" value="ECO:0007669"/>
    <property type="project" value="UniProtKB-KW"/>
</dbReference>
<dbReference type="GO" id="GO:0016705">
    <property type="term" value="F:oxidoreductase activity, acting on paired donors, with incorporation or reduction of molecular oxygen"/>
    <property type="evidence" value="ECO:0007669"/>
    <property type="project" value="InterPro"/>
</dbReference>
<dbReference type="CDD" id="cd11040">
    <property type="entry name" value="CYP7_CYP8-like"/>
    <property type="match status" value="1"/>
</dbReference>
<dbReference type="Gene3D" id="1.10.630.10">
    <property type="entry name" value="Cytochrome P450"/>
    <property type="match status" value="1"/>
</dbReference>
<dbReference type="InterPro" id="IPR053007">
    <property type="entry name" value="CYP450_monoxygenase_sec-met"/>
</dbReference>
<dbReference type="InterPro" id="IPR001128">
    <property type="entry name" value="Cyt_P450"/>
</dbReference>
<dbReference type="InterPro" id="IPR002403">
    <property type="entry name" value="Cyt_P450_E_grp-IV"/>
</dbReference>
<dbReference type="InterPro" id="IPR036396">
    <property type="entry name" value="Cyt_P450_sf"/>
</dbReference>
<dbReference type="PANTHER" id="PTHR47582">
    <property type="entry name" value="P450, PUTATIVE (EUROFUNG)-RELATED"/>
    <property type="match status" value="1"/>
</dbReference>
<dbReference type="PANTHER" id="PTHR47582:SF1">
    <property type="entry name" value="P450, PUTATIVE (EUROFUNG)-RELATED"/>
    <property type="match status" value="1"/>
</dbReference>
<dbReference type="Pfam" id="PF00067">
    <property type="entry name" value="p450"/>
    <property type="match status" value="1"/>
</dbReference>
<dbReference type="PRINTS" id="PR00465">
    <property type="entry name" value="EP450IV"/>
</dbReference>
<dbReference type="SUPFAM" id="SSF48264">
    <property type="entry name" value="Cytochrome P450"/>
    <property type="match status" value="1"/>
</dbReference>
<gene>
    <name evidence="5" type="primary">nodJ</name>
</gene>
<proteinExistence type="inferred from homology"/>
<name>NODJ_HYPPI</name>
<feature type="chain" id="PRO_0000446576" description="Cytochrome P450 monooxygenase nodJ" evidence="2">
    <location>
        <begin position="1"/>
        <end position="514"/>
    </location>
</feature>
<feature type="transmembrane region" description="Helical" evidence="2">
    <location>
        <begin position="2"/>
        <end position="24"/>
    </location>
</feature>
<feature type="binding site" description="axial binding residue" evidence="1">
    <location>
        <position position="432"/>
    </location>
    <ligand>
        <name>heme</name>
        <dbReference type="ChEBI" id="CHEBI:30413"/>
    </ligand>
    <ligandPart>
        <name>Fe</name>
        <dbReference type="ChEBI" id="CHEBI:18248"/>
    </ligandPart>
</feature>
<feature type="glycosylation site" description="N-linked (GlcNAc...) asparagine" evidence="3">
    <location>
        <position position="144"/>
    </location>
</feature>
<feature type="glycosylation site" description="N-linked (GlcNAc...) asparagine" evidence="3">
    <location>
        <position position="245"/>
    </location>
</feature>
<feature type="glycosylation site" description="N-linked (GlcNAc...) asparagine" evidence="3">
    <location>
        <position position="416"/>
    </location>
</feature>
<organism>
    <name type="scientific">Hypoxylon pulicicidum</name>
    <dbReference type="NCBI Taxonomy" id="1243767"/>
    <lineage>
        <taxon>Eukaryota</taxon>
        <taxon>Fungi</taxon>
        <taxon>Dikarya</taxon>
        <taxon>Ascomycota</taxon>
        <taxon>Pezizomycotina</taxon>
        <taxon>Sordariomycetes</taxon>
        <taxon>Xylariomycetidae</taxon>
        <taxon>Xylariales</taxon>
        <taxon>Hypoxylaceae</taxon>
        <taxon>Hypoxylon</taxon>
    </lineage>
</organism>
<keyword id="KW-0325">Glycoprotein</keyword>
<keyword id="KW-0349">Heme</keyword>
<keyword id="KW-0408">Iron</keyword>
<keyword id="KW-0472">Membrane</keyword>
<keyword id="KW-0479">Metal-binding</keyword>
<keyword id="KW-0503">Monooxygenase</keyword>
<keyword id="KW-0560">Oxidoreductase</keyword>
<keyword id="KW-0812">Transmembrane</keyword>
<keyword id="KW-1133">Transmembrane helix</keyword>
<reference key="1">
    <citation type="journal article" date="2018" name="J. Am. Chem. Soc.">
        <title>Heterologous biosynthesis of nodulisporic acid F.</title>
        <authorList>
            <person name="Van de Bittner K.C."/>
            <person name="Nicholson M.J."/>
            <person name="Bustamante L.Y."/>
            <person name="Kessans S.A."/>
            <person name="Ram A."/>
            <person name="van Dolleweerd C.J."/>
            <person name="Scott B."/>
            <person name="Parker E.J."/>
        </authorList>
    </citation>
    <scope>NUCLEOTIDE SEQUENCE [GENOMIC DNA]</scope>
    <scope>IDENTIFICATION</scope>
    <scope>FUNCTION</scope>
    <scope>PATHWAY</scope>
    <source>
        <strain>MF5954 / ATCC 74245</strain>
    </source>
</reference>
<comment type="function">
    <text evidence="4 7">Cytochrome P450 monooxygenase; part of the gene cluster that mediates the biosynthesis of the indole diterpenes nodulisporic acids (NA). Nodulisporic acid A (NAA) and its chemically modified derivatives are of particular significance because of their highly potent insecticidal activity against blood-feeding arthropods and lack of observable adverse effects on mammals, in particular the tremogenicity associated with the paspaline-derived IDTs is not observed (PubMed:29283570). The geranylgeranyl diphosphate (GGPP) synthase ggs1, localized outside of the cluster, is proposed to catalyze the first step in nodulisporic acid biosynthesis via conversion of farnesyl pyrophosphate and isopentyl pyrophosphate into geranylgeranyl pyrophosphate (GGPP) (PubMed:29283570). Condensation of indole-3-glycerol phosphate with GGPP by the prenyl transferase nodC then forms 3-geranylgeranylindole (3-GGI) (PubMed:29283570). Epoxidation by the FAD-dependent monooxygenase nodM leads to a single-epoxidized-GGI that is substrate of the terpene cyclase nodB for cyclization to yield emindole SB (PubMed:29283570). The terminal methyl carbon, C28, of emindole SB is then oxidized by the cytochrome P450 monooxygenase nodW to produce nodulisporic acid F (NAF), the pentacyclic core of NAA (PubMed:29283570). NAF is converted to nodulisporic acid E (NAE) via prenylation. This step is probably performed by one of the indole diterpene prenyltransferases nodD1 or nodD2 (Probable). Several oxidation steps performed by the FAD-linked oxidoreductase nodO and one of the cytochrome P450 monooxygenase nodR, nodX or nodZ further convert NAE to nodulisporic acid D (NAD) (Probable). NAD is substrate of cytochrome P450 monooxygenase nodJ to produce the precursor of nodulisporic acid C (NAC), converted to NAC by one of the indole diterpene prenyltransferases nodD1 or nodD2 (Probable). The FAD-dependent monooxygenase nodY2 then oxidizes NAC to nodulisporic acid B (NAB) (Probable). Finally NAB is converted to NAA by one of the cytochrome P450 monooxygenases nodR, nodX or nodZ (Probable).</text>
</comment>
<comment type="cofactor">
    <cofactor evidence="1">
        <name>heme</name>
        <dbReference type="ChEBI" id="CHEBI:30413"/>
    </cofactor>
</comment>
<comment type="pathway">
    <text evidence="7">Secondary metabolite biosynthesis.</text>
</comment>
<comment type="subcellular location">
    <subcellularLocation>
        <location evidence="2">Membrane</location>
        <topology evidence="2">Single-pass membrane protein</topology>
    </subcellularLocation>
</comment>
<comment type="similarity">
    <text evidence="6">Belongs to the cytochrome P450 family.</text>
</comment>
<sequence>MELIVIIITLAFCILLYGTRWRAALDPREPRLISPTVPLIGHILGIATDGFGYFSKLNDKYGLPAFSLQMPLSRLYVITSSELVPAIQRQSQNIRFDTFEFTLAAERVGGVSGPGLKLLKGSIVDELQHAMHHALIGHGLDAMNLSMIEAIKPSIDELQSQKQAAFDLFAWCKRSITMASTDSVYGPMNPFRSIEVERAFWDFASNMNMIILNVLPFLTARKSLDDRRKVVDALTEYYNLGGHENSSEMTYGRWEVQYNKGITTQDIARMEIVNAIGVLSNTAPSTFWTLFEIYSRPSLLRDLRQELVASAVYTHPGTDGGIVRTIDLSAVRAKCSLLLGTFQEVLRMRSNAIVTRMVHEDTILNERVLFKKGSVIVIPARCVNREKSVWGETGDSFDAYRYLGQGKSGTSRSGRNVTRVAFQSFGTAPNICPGRHFASGEILAVVAMVILRFDMEPVLGEWIPPKANVKTLASSIQTPAGEFMVTLRERKEFKDDKWDFRVTEGDSKFPLLVG</sequence>
<accession>A0A2I6PJ00</accession>